<comment type="catalytic activity">
    <reaction evidence="1">
        <text>sn-glycerol 3-phosphate + an acyl-CoA = a 1-acyl-sn-glycero-3-phosphate + CoA</text>
        <dbReference type="Rhea" id="RHEA:15325"/>
        <dbReference type="ChEBI" id="CHEBI:57287"/>
        <dbReference type="ChEBI" id="CHEBI:57597"/>
        <dbReference type="ChEBI" id="CHEBI:57970"/>
        <dbReference type="ChEBI" id="CHEBI:58342"/>
        <dbReference type="EC" id="2.3.1.15"/>
    </reaction>
</comment>
<comment type="pathway">
    <text evidence="1">Phospholipid metabolism; CDP-diacylglycerol biosynthesis; CDP-diacylglycerol from sn-glycerol 3-phosphate: step 1/3.</text>
</comment>
<comment type="subcellular location">
    <subcellularLocation>
        <location evidence="1">Cell inner membrane</location>
        <topology evidence="1">Peripheral membrane protein</topology>
        <orientation evidence="1">Cytoplasmic side</orientation>
    </subcellularLocation>
</comment>
<comment type="domain">
    <text evidence="1">The HXXXXD motif is essential for acyltransferase activity and may constitute the binding site for the phosphate moiety of the glycerol-3-phosphate.</text>
</comment>
<comment type="similarity">
    <text evidence="1">Belongs to the GPAT/DAPAT family.</text>
</comment>
<organism>
    <name type="scientific">Vibrio atlanticus (strain LGP32)</name>
    <name type="common">Vibrio splendidus (strain Mel32)</name>
    <dbReference type="NCBI Taxonomy" id="575788"/>
    <lineage>
        <taxon>Bacteria</taxon>
        <taxon>Pseudomonadati</taxon>
        <taxon>Pseudomonadota</taxon>
        <taxon>Gammaproteobacteria</taxon>
        <taxon>Vibrionales</taxon>
        <taxon>Vibrionaceae</taxon>
        <taxon>Vibrio</taxon>
    </lineage>
</organism>
<protein>
    <recommendedName>
        <fullName evidence="1">Glycerol-3-phosphate acyltransferase</fullName>
        <shortName evidence="1">GPAT</shortName>
        <ecNumber evidence="1">2.3.1.15</ecNumber>
    </recommendedName>
</protein>
<reference key="1">
    <citation type="submission" date="2009-02" db="EMBL/GenBank/DDBJ databases">
        <title>Vibrio splendidus str. LGP32 complete genome.</title>
        <authorList>
            <person name="Mazel D."/>
            <person name="Le Roux F."/>
        </authorList>
    </citation>
    <scope>NUCLEOTIDE SEQUENCE [LARGE SCALE GENOMIC DNA]</scope>
    <source>
        <strain>LGP32</strain>
    </source>
</reference>
<accession>B7VM97</accession>
<dbReference type="EC" id="2.3.1.15" evidence="1"/>
<dbReference type="EMBL" id="FM954972">
    <property type="protein sequence ID" value="CAV20287.1"/>
    <property type="molecule type" value="Genomic_DNA"/>
</dbReference>
<dbReference type="SMR" id="B7VM97"/>
<dbReference type="STRING" id="575788.VS_3009"/>
<dbReference type="KEGG" id="vsp:VS_3009"/>
<dbReference type="PATRIC" id="fig|575788.5.peg.4199"/>
<dbReference type="eggNOG" id="COG2937">
    <property type="taxonomic scope" value="Bacteria"/>
</dbReference>
<dbReference type="HOGENOM" id="CLU_015407_0_0_6"/>
<dbReference type="UniPathway" id="UPA00557">
    <property type="reaction ID" value="UER00612"/>
</dbReference>
<dbReference type="Proteomes" id="UP000009100">
    <property type="component" value="Chromosome 1"/>
</dbReference>
<dbReference type="GO" id="GO:0005886">
    <property type="term" value="C:plasma membrane"/>
    <property type="evidence" value="ECO:0007669"/>
    <property type="project" value="UniProtKB-SubCell"/>
</dbReference>
<dbReference type="GO" id="GO:0004366">
    <property type="term" value="F:glycerol-3-phosphate O-acyltransferase activity"/>
    <property type="evidence" value="ECO:0007669"/>
    <property type="project" value="UniProtKB-UniRule"/>
</dbReference>
<dbReference type="GO" id="GO:0016024">
    <property type="term" value="P:CDP-diacylglycerol biosynthetic process"/>
    <property type="evidence" value="ECO:0007669"/>
    <property type="project" value="UniProtKB-UniRule"/>
</dbReference>
<dbReference type="GO" id="GO:0006631">
    <property type="term" value="P:fatty acid metabolic process"/>
    <property type="evidence" value="ECO:0007669"/>
    <property type="project" value="TreeGrafter"/>
</dbReference>
<dbReference type="CDD" id="cd07993">
    <property type="entry name" value="LPLAT_DHAPAT-like"/>
    <property type="match status" value="1"/>
</dbReference>
<dbReference type="HAMAP" id="MF_00393">
    <property type="entry name" value="Glyc3P_acyltrans"/>
    <property type="match status" value="1"/>
</dbReference>
<dbReference type="InterPro" id="IPR022284">
    <property type="entry name" value="GPAT/DHAPAT"/>
</dbReference>
<dbReference type="InterPro" id="IPR045520">
    <property type="entry name" value="GPAT/DHAPAT_C"/>
</dbReference>
<dbReference type="InterPro" id="IPR041728">
    <property type="entry name" value="GPAT/DHAPAT_LPLAT"/>
</dbReference>
<dbReference type="InterPro" id="IPR028354">
    <property type="entry name" value="GPAT_PlsB"/>
</dbReference>
<dbReference type="InterPro" id="IPR002123">
    <property type="entry name" value="Plipid/glycerol_acylTrfase"/>
</dbReference>
<dbReference type="NCBIfam" id="TIGR03703">
    <property type="entry name" value="plsB"/>
    <property type="match status" value="1"/>
</dbReference>
<dbReference type="NCBIfam" id="NF003441">
    <property type="entry name" value="PRK04974.1"/>
    <property type="match status" value="1"/>
</dbReference>
<dbReference type="PANTHER" id="PTHR12563:SF17">
    <property type="entry name" value="DIHYDROXYACETONE PHOSPHATE ACYLTRANSFERASE"/>
    <property type="match status" value="1"/>
</dbReference>
<dbReference type="PANTHER" id="PTHR12563">
    <property type="entry name" value="GLYCEROL-3-PHOSPHATE ACYLTRANSFERASE"/>
    <property type="match status" value="1"/>
</dbReference>
<dbReference type="Pfam" id="PF01553">
    <property type="entry name" value="Acyltransferase"/>
    <property type="match status" value="1"/>
</dbReference>
<dbReference type="Pfam" id="PF19277">
    <property type="entry name" value="GPAT_C"/>
    <property type="match status" value="1"/>
</dbReference>
<dbReference type="PIRSF" id="PIRSF500064">
    <property type="entry name" value="GPAT"/>
    <property type="match status" value="1"/>
</dbReference>
<dbReference type="PIRSF" id="PIRSF000437">
    <property type="entry name" value="GPAT_DHAPAT"/>
    <property type="match status" value="1"/>
</dbReference>
<dbReference type="SMART" id="SM00563">
    <property type="entry name" value="PlsC"/>
    <property type="match status" value="1"/>
</dbReference>
<dbReference type="SUPFAM" id="SSF69593">
    <property type="entry name" value="Glycerol-3-phosphate (1)-acyltransferase"/>
    <property type="match status" value="1"/>
</dbReference>
<keyword id="KW-0012">Acyltransferase</keyword>
<keyword id="KW-0997">Cell inner membrane</keyword>
<keyword id="KW-1003">Cell membrane</keyword>
<keyword id="KW-0444">Lipid biosynthesis</keyword>
<keyword id="KW-0443">Lipid metabolism</keyword>
<keyword id="KW-0472">Membrane</keyword>
<keyword id="KW-0594">Phospholipid biosynthesis</keyword>
<keyword id="KW-1208">Phospholipid metabolism</keyword>
<keyword id="KW-0808">Transferase</keyword>
<name>PLSB_VIBA3</name>
<evidence type="ECO:0000255" key="1">
    <source>
        <dbReference type="HAMAP-Rule" id="MF_00393"/>
    </source>
</evidence>
<feature type="chain" id="PRO_1000192411" description="Glycerol-3-phosphate acyltransferase">
    <location>
        <begin position="1"/>
        <end position="807"/>
    </location>
</feature>
<feature type="short sequence motif" description="HXXXXD motif">
    <location>
        <begin position="305"/>
        <end position="310"/>
    </location>
</feature>
<gene>
    <name evidence="1" type="primary">plsB</name>
    <name type="ordered locus">VS_3009</name>
</gene>
<sequence>MSSGQSFSRSLMKLPLSLLVKSTSIPSNPVEDLNIDLSKPIVYALPFRSSVDILTLQKHALELGLPDPLSKLEINGKSLQRYVFISSRKTLLQDDDYVPSSSIEVFSELLSLHAEDSELDVQVIPATVLWGRKPGKENNQKPYLQAMNGLEKSKAVLLAGRDCLVRFSPVVSLRYMANSHGTDSTIAHKLARVARIHFSRQKLAASGPNLPSRQALFDRLLKSEAIKKAIEDEAESKNISIEKASKEAQDIMDEIAANFSYSLIKRGEKILGWLWNKLYQGLHISNASTVRKLAQDGHEIVYVPCHRSHMDYLLLSYVLYHEGMVPPHIAAGINLNFFPAGPIFRHGGAFFIRRSFKGNKLYSTIFREYLAELFAKGYSVEYFSEGGRSRTGRLLQAKTGMLAMTIQAMLRGMNRPVTLVPVYIGYEHVMEVATYAKELRGKRKEKENASLVIRTIRKLRNFGKGYVNFGEPIQLNQYLNEHAPEWTKDIDPMGTSKPQWMNPVVNDLATKMMTHINDAAATNALTLCATALLASRQRALSRDSLVSQINCYLSLLKNVPYSDTFTVPKDSAEDLVKHAESLNKFLIESDTMGDIISLDRHQSILMTYYRNNIIHLFALPSLIAQMTIRQHGLSIDAIQENVAAIYPFLKKELFLSYDEDQLESVVANIIDELVGQGMLVVSNNQVTINQSNSQALMLLGRTISETLQRYSIALNLLAENPDLDKSDLEQKSQDIAQRLGRLHGINAPEFFDKGVFASMFATLKQQQYLDNDGNCDLEKTQQFAKLLYSMLYPEVRLTIQESIHQAE</sequence>
<proteinExistence type="inferred from homology"/>